<feature type="chain" id="PRO_0000415474" description="Hypoxanthine/guanine phosphoribosyltransferase">
    <location>
        <begin position="1"/>
        <end position="187"/>
    </location>
</feature>
<evidence type="ECO:0000255" key="1">
    <source>
        <dbReference type="HAMAP-Rule" id="MF_01467"/>
    </source>
</evidence>
<proteinExistence type="inferred from homology"/>
<name>HPRT_METLZ</name>
<gene>
    <name evidence="1" type="primary">hpt</name>
    <name type="ordered locus">Mlab_0219</name>
</gene>
<reference key="1">
    <citation type="journal article" date="2009" name="Stand. Genomic Sci.">
        <title>Complete genome sequence of Methanocorpusculum labreanum type strain Z.</title>
        <authorList>
            <person name="Anderson I.J."/>
            <person name="Sieprawska-Lupa M."/>
            <person name="Goltsman E."/>
            <person name="Lapidus A."/>
            <person name="Copeland A."/>
            <person name="Glavina Del Rio T."/>
            <person name="Tice H."/>
            <person name="Dalin E."/>
            <person name="Barry K."/>
            <person name="Pitluck S."/>
            <person name="Hauser L."/>
            <person name="Land M."/>
            <person name="Lucas S."/>
            <person name="Richardson P."/>
            <person name="Whitman W.B."/>
            <person name="Kyrpides N.C."/>
        </authorList>
    </citation>
    <scope>NUCLEOTIDE SEQUENCE [LARGE SCALE GENOMIC DNA]</scope>
    <source>
        <strain>ATCC 43576 / DSM 4855 / Z</strain>
    </source>
</reference>
<organism>
    <name type="scientific">Methanocorpusculum labreanum (strain ATCC 43576 / DSM 4855 / Z)</name>
    <dbReference type="NCBI Taxonomy" id="410358"/>
    <lineage>
        <taxon>Archaea</taxon>
        <taxon>Methanobacteriati</taxon>
        <taxon>Methanobacteriota</taxon>
        <taxon>Stenosarchaea group</taxon>
        <taxon>Methanomicrobia</taxon>
        <taxon>Methanomicrobiales</taxon>
        <taxon>Methanocorpusculaceae</taxon>
        <taxon>Methanocorpusculum</taxon>
    </lineage>
</organism>
<protein>
    <recommendedName>
        <fullName evidence="1">Hypoxanthine/guanine phosphoribosyltransferase</fullName>
        <shortName evidence="1">HGPRTase</shortName>
        <ecNumber evidence="1">2.4.2.8</ecNumber>
    </recommendedName>
</protein>
<accession>A2SPY9</accession>
<dbReference type="EC" id="2.4.2.8" evidence="1"/>
<dbReference type="EMBL" id="CP000559">
    <property type="protein sequence ID" value="ABN06395.1"/>
    <property type="molecule type" value="Genomic_DNA"/>
</dbReference>
<dbReference type="RefSeq" id="WP_011832596.1">
    <property type="nucleotide sequence ID" value="NC_008942.1"/>
</dbReference>
<dbReference type="SMR" id="A2SPY9"/>
<dbReference type="STRING" id="410358.Mlab_0219"/>
<dbReference type="GeneID" id="4795677"/>
<dbReference type="KEGG" id="mla:Mlab_0219"/>
<dbReference type="eggNOG" id="arCOG00030">
    <property type="taxonomic scope" value="Archaea"/>
</dbReference>
<dbReference type="HOGENOM" id="CLU_126376_0_0_2"/>
<dbReference type="OrthoDB" id="8323at2157"/>
<dbReference type="UniPathway" id="UPA00591">
    <property type="reaction ID" value="UER00648"/>
</dbReference>
<dbReference type="Proteomes" id="UP000000365">
    <property type="component" value="Chromosome"/>
</dbReference>
<dbReference type="GO" id="GO:0005737">
    <property type="term" value="C:cytoplasm"/>
    <property type="evidence" value="ECO:0007669"/>
    <property type="project" value="UniProtKB-SubCell"/>
</dbReference>
<dbReference type="GO" id="GO:0052657">
    <property type="term" value="F:guanine phosphoribosyltransferase activity"/>
    <property type="evidence" value="ECO:0007669"/>
    <property type="project" value="RHEA"/>
</dbReference>
<dbReference type="GO" id="GO:0004422">
    <property type="term" value="F:hypoxanthine phosphoribosyltransferase activity"/>
    <property type="evidence" value="ECO:0007669"/>
    <property type="project" value="UniProtKB-UniRule"/>
</dbReference>
<dbReference type="GO" id="GO:0032264">
    <property type="term" value="P:IMP salvage"/>
    <property type="evidence" value="ECO:0007669"/>
    <property type="project" value="UniProtKB-UniRule"/>
</dbReference>
<dbReference type="GO" id="GO:0006166">
    <property type="term" value="P:purine ribonucleoside salvage"/>
    <property type="evidence" value="ECO:0007669"/>
    <property type="project" value="UniProtKB-KW"/>
</dbReference>
<dbReference type="CDD" id="cd06223">
    <property type="entry name" value="PRTases_typeI"/>
    <property type="match status" value="1"/>
</dbReference>
<dbReference type="Gene3D" id="3.40.50.2020">
    <property type="match status" value="1"/>
</dbReference>
<dbReference type="HAMAP" id="MF_01467">
    <property type="entry name" value="Hypx_phosphoribosyltr"/>
    <property type="match status" value="1"/>
</dbReference>
<dbReference type="InterPro" id="IPR026597">
    <property type="entry name" value="HGPRTase-like"/>
</dbReference>
<dbReference type="InterPro" id="IPR000836">
    <property type="entry name" value="PRibTrfase_dom"/>
</dbReference>
<dbReference type="InterPro" id="IPR029057">
    <property type="entry name" value="PRTase-like"/>
</dbReference>
<dbReference type="InterPro" id="IPR050118">
    <property type="entry name" value="Pur/Pyrimidine_PRTase"/>
</dbReference>
<dbReference type="NCBIfam" id="NF040646">
    <property type="entry name" value="HPT_Archaea"/>
    <property type="match status" value="1"/>
</dbReference>
<dbReference type="NCBIfam" id="NF002635">
    <property type="entry name" value="PRK02304.1-4"/>
    <property type="match status" value="1"/>
</dbReference>
<dbReference type="PANTHER" id="PTHR43864">
    <property type="entry name" value="HYPOXANTHINE/GUANINE PHOSPHORIBOSYLTRANSFERASE"/>
    <property type="match status" value="1"/>
</dbReference>
<dbReference type="PANTHER" id="PTHR43864:SF1">
    <property type="entry name" value="XANTHINE PHOSPHORIBOSYLTRANSFERASE"/>
    <property type="match status" value="1"/>
</dbReference>
<dbReference type="Pfam" id="PF00156">
    <property type="entry name" value="Pribosyltran"/>
    <property type="match status" value="1"/>
</dbReference>
<dbReference type="SUPFAM" id="SSF53271">
    <property type="entry name" value="PRTase-like"/>
    <property type="match status" value="1"/>
</dbReference>
<dbReference type="PROSITE" id="PS00103">
    <property type="entry name" value="PUR_PYR_PR_TRANSFER"/>
    <property type="match status" value="1"/>
</dbReference>
<comment type="function">
    <text evidence="1">Catalyzes a salvage reaction resulting in the formation of IMP that is energically less costly than de novo synthesis.</text>
</comment>
<comment type="catalytic activity">
    <reaction evidence="1">
        <text>IMP + diphosphate = hypoxanthine + 5-phospho-alpha-D-ribose 1-diphosphate</text>
        <dbReference type="Rhea" id="RHEA:17973"/>
        <dbReference type="ChEBI" id="CHEBI:17368"/>
        <dbReference type="ChEBI" id="CHEBI:33019"/>
        <dbReference type="ChEBI" id="CHEBI:58017"/>
        <dbReference type="ChEBI" id="CHEBI:58053"/>
        <dbReference type="EC" id="2.4.2.8"/>
    </reaction>
</comment>
<comment type="catalytic activity">
    <reaction evidence="1">
        <text>GMP + diphosphate = guanine + 5-phospho-alpha-D-ribose 1-diphosphate</text>
        <dbReference type="Rhea" id="RHEA:25424"/>
        <dbReference type="ChEBI" id="CHEBI:16235"/>
        <dbReference type="ChEBI" id="CHEBI:33019"/>
        <dbReference type="ChEBI" id="CHEBI:58017"/>
        <dbReference type="ChEBI" id="CHEBI:58115"/>
        <dbReference type="EC" id="2.4.2.8"/>
    </reaction>
</comment>
<comment type="pathway">
    <text evidence="1">Purine metabolism; IMP biosynthesis via salvage pathway; IMP from hypoxanthine: step 1/1.</text>
</comment>
<comment type="subunit">
    <text evidence="1">Homodimer.</text>
</comment>
<comment type="subcellular location">
    <subcellularLocation>
        <location evidence="1">Cytoplasm</location>
    </subcellularLocation>
</comment>
<comment type="similarity">
    <text evidence="1">Belongs to the purine/pyrimidine phosphoribosyltransferase family. Archaeal HPRT subfamily.</text>
</comment>
<sequence length="187" mass="20289">MLEILKESLLTCPMVKREKDGVVYNYFINPLTDGIPEVTAELLRDVTAAMMVSLDLKNVDKIVVSEAMGIHIGTALTLATGIPFVVIRKREYRLPGEVVIGQETGYSKGTLYMNCVHKGDRVVIIDDVISTGGTIKGILPALKIAGAELVDILFVVNRGSPDIGIPYKTLVTIDVDENGVKIIDSAF</sequence>
<keyword id="KW-0963">Cytoplasm</keyword>
<keyword id="KW-0328">Glycosyltransferase</keyword>
<keyword id="KW-0660">Purine salvage</keyword>
<keyword id="KW-1185">Reference proteome</keyword>
<keyword id="KW-0808">Transferase</keyword>